<gene>
    <name evidence="1" type="primary">recO</name>
    <name type="ordered locus">UTI89_C2886</name>
</gene>
<accession>Q1R8G8</accession>
<keyword id="KW-0227">DNA damage</keyword>
<keyword id="KW-0233">DNA recombination</keyword>
<keyword id="KW-0234">DNA repair</keyword>
<comment type="function">
    <text evidence="1">Involved in DNA repair and RecF pathway recombination.</text>
</comment>
<comment type="subunit">
    <text evidence="1">Monomer.</text>
</comment>
<comment type="similarity">
    <text evidence="1">Belongs to the RecO family.</text>
</comment>
<name>RECO_ECOUT</name>
<sequence>MEGWQRAFVLHSRPWSETSLMLDVFTEESGRVRLVAKGARSKRSTLKGALQPFTPLLLRFGGRGEVKTLRSAEAVSLALPLSGITLYSGLYINELLSRVLEYETRFSELFFDYLHCIQSLAGVTGTPEPALRRFELALLGHLGYGVNFTHCAGSGEPVDDTMTYRYREEKGFIASVVIDNKTFTGRQLKALNAREFPDADTLRAAKRFTRMALKPYLGGKPLKSRELFRQFMPKRTVKTHYE</sequence>
<evidence type="ECO:0000255" key="1">
    <source>
        <dbReference type="HAMAP-Rule" id="MF_00201"/>
    </source>
</evidence>
<proteinExistence type="inferred from homology"/>
<organism>
    <name type="scientific">Escherichia coli (strain UTI89 / UPEC)</name>
    <dbReference type="NCBI Taxonomy" id="364106"/>
    <lineage>
        <taxon>Bacteria</taxon>
        <taxon>Pseudomonadati</taxon>
        <taxon>Pseudomonadota</taxon>
        <taxon>Gammaproteobacteria</taxon>
        <taxon>Enterobacterales</taxon>
        <taxon>Enterobacteriaceae</taxon>
        <taxon>Escherichia</taxon>
    </lineage>
</organism>
<dbReference type="EMBL" id="CP000243">
    <property type="protein sequence ID" value="ABE08346.1"/>
    <property type="molecule type" value="Genomic_DNA"/>
</dbReference>
<dbReference type="RefSeq" id="WP_000399404.1">
    <property type="nucleotide sequence ID" value="NZ_CP064825.1"/>
</dbReference>
<dbReference type="SMR" id="Q1R8G8"/>
<dbReference type="KEGG" id="eci:UTI89_C2886"/>
<dbReference type="HOGENOM" id="CLU_066645_1_0_6"/>
<dbReference type="Proteomes" id="UP000001952">
    <property type="component" value="Chromosome"/>
</dbReference>
<dbReference type="GO" id="GO:0043590">
    <property type="term" value="C:bacterial nucleoid"/>
    <property type="evidence" value="ECO:0007669"/>
    <property type="project" value="TreeGrafter"/>
</dbReference>
<dbReference type="GO" id="GO:0006310">
    <property type="term" value="P:DNA recombination"/>
    <property type="evidence" value="ECO:0007669"/>
    <property type="project" value="UniProtKB-UniRule"/>
</dbReference>
<dbReference type="GO" id="GO:0006302">
    <property type="term" value="P:double-strand break repair"/>
    <property type="evidence" value="ECO:0007669"/>
    <property type="project" value="TreeGrafter"/>
</dbReference>
<dbReference type="FunFam" id="1.20.1440.120:FF:000001">
    <property type="entry name" value="DNA repair protein RecO"/>
    <property type="match status" value="1"/>
</dbReference>
<dbReference type="FunFam" id="2.40.50.140:FF:000074">
    <property type="entry name" value="DNA repair protein RecO"/>
    <property type="match status" value="1"/>
</dbReference>
<dbReference type="Gene3D" id="2.40.50.140">
    <property type="entry name" value="Nucleic acid-binding proteins"/>
    <property type="match status" value="1"/>
</dbReference>
<dbReference type="Gene3D" id="1.20.1440.120">
    <property type="entry name" value="Recombination protein O, C-terminal domain"/>
    <property type="match status" value="1"/>
</dbReference>
<dbReference type="HAMAP" id="MF_00201">
    <property type="entry name" value="RecO"/>
    <property type="match status" value="1"/>
</dbReference>
<dbReference type="InterPro" id="IPR037278">
    <property type="entry name" value="ARFGAP/RecO"/>
</dbReference>
<dbReference type="InterPro" id="IPR022572">
    <property type="entry name" value="DNA_rep/recomb_RecO_N"/>
</dbReference>
<dbReference type="InterPro" id="IPR012340">
    <property type="entry name" value="NA-bd_OB-fold"/>
</dbReference>
<dbReference type="InterPro" id="IPR003717">
    <property type="entry name" value="RecO"/>
</dbReference>
<dbReference type="InterPro" id="IPR042242">
    <property type="entry name" value="RecO_C"/>
</dbReference>
<dbReference type="NCBIfam" id="TIGR00613">
    <property type="entry name" value="reco"/>
    <property type="match status" value="1"/>
</dbReference>
<dbReference type="PANTHER" id="PTHR33991">
    <property type="entry name" value="DNA REPAIR PROTEIN RECO"/>
    <property type="match status" value="1"/>
</dbReference>
<dbReference type="PANTHER" id="PTHR33991:SF1">
    <property type="entry name" value="DNA REPAIR PROTEIN RECO"/>
    <property type="match status" value="1"/>
</dbReference>
<dbReference type="Pfam" id="PF02565">
    <property type="entry name" value="RecO_C"/>
    <property type="match status" value="1"/>
</dbReference>
<dbReference type="Pfam" id="PF11967">
    <property type="entry name" value="RecO_N"/>
    <property type="match status" value="1"/>
</dbReference>
<dbReference type="SUPFAM" id="SSF57863">
    <property type="entry name" value="ArfGap/RecO-like zinc finger"/>
    <property type="match status" value="1"/>
</dbReference>
<dbReference type="SUPFAM" id="SSF50249">
    <property type="entry name" value="Nucleic acid-binding proteins"/>
    <property type="match status" value="1"/>
</dbReference>
<reference key="1">
    <citation type="journal article" date="2006" name="Proc. Natl. Acad. Sci. U.S.A.">
        <title>Identification of genes subject to positive selection in uropathogenic strains of Escherichia coli: a comparative genomics approach.</title>
        <authorList>
            <person name="Chen S.L."/>
            <person name="Hung C.-S."/>
            <person name="Xu J."/>
            <person name="Reigstad C.S."/>
            <person name="Magrini V."/>
            <person name="Sabo A."/>
            <person name="Blasiar D."/>
            <person name="Bieri T."/>
            <person name="Meyer R.R."/>
            <person name="Ozersky P."/>
            <person name="Armstrong J.R."/>
            <person name="Fulton R.S."/>
            <person name="Latreille J.P."/>
            <person name="Spieth J."/>
            <person name="Hooton T.M."/>
            <person name="Mardis E.R."/>
            <person name="Hultgren S.J."/>
            <person name="Gordon J.I."/>
        </authorList>
    </citation>
    <scope>NUCLEOTIDE SEQUENCE [LARGE SCALE GENOMIC DNA]</scope>
    <source>
        <strain>UTI89 / UPEC</strain>
    </source>
</reference>
<feature type="chain" id="PRO_0000264815" description="DNA repair protein RecO">
    <location>
        <begin position="1"/>
        <end position="242"/>
    </location>
</feature>
<protein>
    <recommendedName>
        <fullName evidence="1">DNA repair protein RecO</fullName>
    </recommendedName>
    <alternativeName>
        <fullName evidence="1">Recombination protein O</fullName>
    </alternativeName>
</protein>